<gene>
    <name evidence="1" type="primary">queA</name>
    <name type="ordered locus">SPH_1547</name>
</gene>
<keyword id="KW-0963">Cytoplasm</keyword>
<keyword id="KW-0671">Queuosine biosynthesis</keyword>
<keyword id="KW-0949">S-adenosyl-L-methionine</keyword>
<keyword id="KW-0808">Transferase</keyword>
<evidence type="ECO:0000255" key="1">
    <source>
        <dbReference type="HAMAP-Rule" id="MF_00113"/>
    </source>
</evidence>
<feature type="chain" id="PRO_1000094821" description="S-adenosylmethionine:tRNA ribosyltransferase-isomerase">
    <location>
        <begin position="1"/>
        <end position="342"/>
    </location>
</feature>
<proteinExistence type="inferred from homology"/>
<name>QUEA_STRPI</name>
<comment type="function">
    <text evidence="1">Transfers and isomerizes the ribose moiety from AdoMet to the 7-aminomethyl group of 7-deazaguanine (preQ1-tRNA) to give epoxyqueuosine (oQ-tRNA).</text>
</comment>
<comment type="catalytic activity">
    <reaction evidence="1">
        <text>7-aminomethyl-7-carbaguanosine(34) in tRNA + S-adenosyl-L-methionine = epoxyqueuosine(34) in tRNA + adenine + L-methionine + 2 H(+)</text>
        <dbReference type="Rhea" id="RHEA:32155"/>
        <dbReference type="Rhea" id="RHEA-COMP:10342"/>
        <dbReference type="Rhea" id="RHEA-COMP:18582"/>
        <dbReference type="ChEBI" id="CHEBI:15378"/>
        <dbReference type="ChEBI" id="CHEBI:16708"/>
        <dbReference type="ChEBI" id="CHEBI:57844"/>
        <dbReference type="ChEBI" id="CHEBI:59789"/>
        <dbReference type="ChEBI" id="CHEBI:82833"/>
        <dbReference type="ChEBI" id="CHEBI:194443"/>
        <dbReference type="EC" id="2.4.99.17"/>
    </reaction>
</comment>
<comment type="pathway">
    <text evidence="1">tRNA modification; tRNA-queuosine biosynthesis.</text>
</comment>
<comment type="subunit">
    <text evidence="1">Monomer.</text>
</comment>
<comment type="subcellular location">
    <subcellularLocation>
        <location evidence="1">Cytoplasm</location>
    </subcellularLocation>
</comment>
<comment type="similarity">
    <text evidence="1">Belongs to the QueA family.</text>
</comment>
<dbReference type="EC" id="2.4.99.17" evidence="1"/>
<dbReference type="EMBL" id="CP000936">
    <property type="protein sequence ID" value="ACA35559.1"/>
    <property type="molecule type" value="Genomic_DNA"/>
</dbReference>
<dbReference type="RefSeq" id="WP_001090152.1">
    <property type="nucleotide sequence ID" value="NC_010380.1"/>
</dbReference>
<dbReference type="SMR" id="B1ICL6"/>
<dbReference type="KEGG" id="spv:SPH_1547"/>
<dbReference type="HOGENOM" id="CLU_039110_1_0_9"/>
<dbReference type="UniPathway" id="UPA00392"/>
<dbReference type="Proteomes" id="UP000002163">
    <property type="component" value="Chromosome"/>
</dbReference>
<dbReference type="GO" id="GO:0005737">
    <property type="term" value="C:cytoplasm"/>
    <property type="evidence" value="ECO:0007669"/>
    <property type="project" value="UniProtKB-SubCell"/>
</dbReference>
<dbReference type="GO" id="GO:0051075">
    <property type="term" value="F:S-adenosylmethionine:tRNA ribosyltransferase-isomerase activity"/>
    <property type="evidence" value="ECO:0007669"/>
    <property type="project" value="UniProtKB-EC"/>
</dbReference>
<dbReference type="GO" id="GO:0008616">
    <property type="term" value="P:queuosine biosynthetic process"/>
    <property type="evidence" value="ECO:0007669"/>
    <property type="project" value="UniProtKB-UniRule"/>
</dbReference>
<dbReference type="GO" id="GO:0002099">
    <property type="term" value="P:tRNA wobble guanine modification"/>
    <property type="evidence" value="ECO:0007669"/>
    <property type="project" value="TreeGrafter"/>
</dbReference>
<dbReference type="FunFam" id="2.40.10.240:FF:000002">
    <property type="entry name" value="S-adenosylmethionine:tRNA ribosyltransferase-isomerase"/>
    <property type="match status" value="1"/>
</dbReference>
<dbReference type="FunFam" id="3.40.1780.10:FF:000001">
    <property type="entry name" value="S-adenosylmethionine:tRNA ribosyltransferase-isomerase"/>
    <property type="match status" value="1"/>
</dbReference>
<dbReference type="Gene3D" id="2.40.10.240">
    <property type="entry name" value="QueA-like"/>
    <property type="match status" value="1"/>
</dbReference>
<dbReference type="Gene3D" id="3.40.1780.10">
    <property type="entry name" value="QueA-like"/>
    <property type="match status" value="1"/>
</dbReference>
<dbReference type="HAMAP" id="MF_00113">
    <property type="entry name" value="QueA"/>
    <property type="match status" value="1"/>
</dbReference>
<dbReference type="InterPro" id="IPR003699">
    <property type="entry name" value="QueA"/>
</dbReference>
<dbReference type="InterPro" id="IPR042118">
    <property type="entry name" value="QueA_dom1"/>
</dbReference>
<dbReference type="InterPro" id="IPR042119">
    <property type="entry name" value="QueA_dom2"/>
</dbReference>
<dbReference type="InterPro" id="IPR036100">
    <property type="entry name" value="QueA_sf"/>
</dbReference>
<dbReference type="NCBIfam" id="NF001140">
    <property type="entry name" value="PRK00147.1"/>
    <property type="match status" value="1"/>
</dbReference>
<dbReference type="NCBIfam" id="TIGR00113">
    <property type="entry name" value="queA"/>
    <property type="match status" value="1"/>
</dbReference>
<dbReference type="PANTHER" id="PTHR30307">
    <property type="entry name" value="S-ADENOSYLMETHIONINE:TRNA RIBOSYLTRANSFERASE-ISOMERASE"/>
    <property type="match status" value="1"/>
</dbReference>
<dbReference type="PANTHER" id="PTHR30307:SF0">
    <property type="entry name" value="S-ADENOSYLMETHIONINE:TRNA RIBOSYLTRANSFERASE-ISOMERASE"/>
    <property type="match status" value="1"/>
</dbReference>
<dbReference type="Pfam" id="PF02547">
    <property type="entry name" value="Queuosine_synth"/>
    <property type="match status" value="1"/>
</dbReference>
<dbReference type="SUPFAM" id="SSF111337">
    <property type="entry name" value="QueA-like"/>
    <property type="match status" value="1"/>
</dbReference>
<sequence>MNTADFDFHLPEELIAQTPLEKRDASKLLIVNRETGEMQDKHFHSIIDMLEPGDALVMNDTRVLPARLYGQKVETGGHVELLLLKNTSGDEWEVLAKPAKRLKVGTRISFGDGRLSAVVTEELTHGGRIVRFEYQGIFLEVLESLGEMPLPPYIHEKLDDRERYQTVYAKESGSAAAPTAGLHFTKELLAEIQAKGVHLVYLTLHVGLGTFRPVSVDNLDEHEMHSEFYQLSEEAAATLRSVKKNGGRVIAVGTTSIRTLETIGSKFDGQIQADSGWTNIFIKPGYEWKVVDAFSTNFHLPKSTLVMLVSAFAGRELVLDAYHHAIQEHYRFFSFGDAMFIY</sequence>
<protein>
    <recommendedName>
        <fullName evidence="1">S-adenosylmethionine:tRNA ribosyltransferase-isomerase</fullName>
        <ecNumber evidence="1">2.4.99.17</ecNumber>
    </recommendedName>
    <alternativeName>
        <fullName evidence="1">Queuosine biosynthesis protein QueA</fullName>
    </alternativeName>
</protein>
<reference key="1">
    <citation type="journal article" date="2010" name="Genome Biol.">
        <title>Structure and dynamics of the pan-genome of Streptococcus pneumoniae and closely related species.</title>
        <authorList>
            <person name="Donati C."/>
            <person name="Hiller N.L."/>
            <person name="Tettelin H."/>
            <person name="Muzzi A."/>
            <person name="Croucher N.J."/>
            <person name="Angiuoli S.V."/>
            <person name="Oggioni M."/>
            <person name="Dunning Hotopp J.C."/>
            <person name="Hu F.Z."/>
            <person name="Riley D.R."/>
            <person name="Covacci A."/>
            <person name="Mitchell T.J."/>
            <person name="Bentley S.D."/>
            <person name="Kilian M."/>
            <person name="Ehrlich G.D."/>
            <person name="Rappuoli R."/>
            <person name="Moxon E.R."/>
            <person name="Masignani V."/>
        </authorList>
    </citation>
    <scope>NUCLEOTIDE SEQUENCE [LARGE SCALE GENOMIC DNA]</scope>
    <source>
        <strain>Hungary19A-6</strain>
    </source>
</reference>
<organism>
    <name type="scientific">Streptococcus pneumoniae (strain Hungary19A-6)</name>
    <dbReference type="NCBI Taxonomy" id="487214"/>
    <lineage>
        <taxon>Bacteria</taxon>
        <taxon>Bacillati</taxon>
        <taxon>Bacillota</taxon>
        <taxon>Bacilli</taxon>
        <taxon>Lactobacillales</taxon>
        <taxon>Streptococcaceae</taxon>
        <taxon>Streptococcus</taxon>
    </lineage>
</organism>
<accession>B1ICL6</accession>